<gene>
    <name evidence="1" type="primary">scpA</name>
    <name type="ordered locus">SP_1876</name>
</gene>
<comment type="function">
    <text evidence="1">Participates in chromosomal partition during cell division. May act via the formation of a condensin-like complex containing Smc and ScpB that pull DNA away from mid-cell into both cell halves.</text>
</comment>
<comment type="subunit">
    <text evidence="1">Component of a cohesin-like complex composed of ScpA, ScpB and the Smc homodimer, in which ScpA and ScpB bind to the head domain of Smc. The presence of the three proteins is required for the association of the complex with DNA.</text>
</comment>
<comment type="interaction">
    <interactant intactId="EBI-2207368">
        <id>Q97NX5</id>
    </interactant>
    <interactant intactId="EBI-2207039">
        <id>Q97SE6</id>
        <label>gatA</label>
    </interactant>
    <organismsDiffer>false</organismsDiffer>
    <experiments>2</experiments>
</comment>
<comment type="interaction">
    <interactant intactId="EBI-2207368">
        <id>Q97NX5</id>
    </interactant>
    <interactant intactId="EBI-2206949">
        <id>Q97NV3</id>
        <label>groES</label>
    </interactant>
    <organismsDiffer>false</organismsDiffer>
    <experiments>2</experiments>
</comment>
<comment type="interaction">
    <interactant intactId="EBI-2207368">
        <id>Q97NX5</id>
    </interactant>
    <interactant intactId="EBI-2207109">
        <id>P0CB75</id>
        <label>pyrF</label>
    </interactant>
    <organismsDiffer>false</organismsDiffer>
    <experiments>3</experiments>
</comment>
<comment type="interaction">
    <interactant intactId="EBI-2207368">
        <id>Q97NX5</id>
    </interactant>
    <interactant intactId="EBI-2206697">
        <id>Q97NX6</id>
        <label>scpB</label>
    </interactant>
    <organismsDiffer>false</organismsDiffer>
    <experiments>3</experiments>
</comment>
<comment type="subcellular location">
    <subcellularLocation>
        <location evidence="1">Cytoplasm</location>
    </subcellularLocation>
    <text evidence="1">Associated with two foci at the outer edges of the nucleoid region in young cells, and at four foci within both cell halves in older cells.</text>
</comment>
<comment type="similarity">
    <text evidence="1">Belongs to the ScpA family.</text>
</comment>
<reference key="1">
    <citation type="journal article" date="2001" name="Science">
        <title>Complete genome sequence of a virulent isolate of Streptococcus pneumoniae.</title>
        <authorList>
            <person name="Tettelin H."/>
            <person name="Nelson K.E."/>
            <person name="Paulsen I.T."/>
            <person name="Eisen J.A."/>
            <person name="Read T.D."/>
            <person name="Peterson S.N."/>
            <person name="Heidelberg J.F."/>
            <person name="DeBoy R.T."/>
            <person name="Haft D.H."/>
            <person name="Dodson R.J."/>
            <person name="Durkin A.S."/>
            <person name="Gwinn M.L."/>
            <person name="Kolonay J.F."/>
            <person name="Nelson W.C."/>
            <person name="Peterson J.D."/>
            <person name="Umayam L.A."/>
            <person name="White O."/>
            <person name="Salzberg S.L."/>
            <person name="Lewis M.R."/>
            <person name="Radune D."/>
            <person name="Holtzapple E.K."/>
            <person name="Khouri H.M."/>
            <person name="Wolf A.M."/>
            <person name="Utterback T.R."/>
            <person name="Hansen C.L."/>
            <person name="McDonald L.A."/>
            <person name="Feldblyum T.V."/>
            <person name="Angiuoli S.V."/>
            <person name="Dickinson T."/>
            <person name="Hickey E.K."/>
            <person name="Holt I.E."/>
            <person name="Loftus B.J."/>
            <person name="Yang F."/>
            <person name="Smith H.O."/>
            <person name="Venter J.C."/>
            <person name="Dougherty B.A."/>
            <person name="Morrison D.A."/>
            <person name="Hollingshead S.K."/>
            <person name="Fraser C.M."/>
        </authorList>
    </citation>
    <scope>NUCLEOTIDE SEQUENCE [LARGE SCALE GENOMIC DNA]</scope>
    <source>
        <strain>ATCC BAA-334 / TIGR4</strain>
    </source>
</reference>
<feature type="chain" id="PRO_0000211114" description="Segregation and condensation protein A">
    <location>
        <begin position="1"/>
        <end position="242"/>
    </location>
</feature>
<dbReference type="EMBL" id="AE005672">
    <property type="protein sequence ID" value="AAK75948.1"/>
    <property type="molecule type" value="Genomic_DNA"/>
</dbReference>
<dbReference type="PIR" id="C95219">
    <property type="entry name" value="C95219"/>
</dbReference>
<dbReference type="RefSeq" id="WP_000351912.1">
    <property type="nucleotide sequence ID" value="NZ_CP155539.1"/>
</dbReference>
<dbReference type="SMR" id="Q97NX5"/>
<dbReference type="IntAct" id="Q97NX5">
    <property type="interactions" value="4"/>
</dbReference>
<dbReference type="PaxDb" id="170187-SP_1876"/>
<dbReference type="EnsemblBacteria" id="AAK75948">
    <property type="protein sequence ID" value="AAK75948"/>
    <property type="gene ID" value="SP_1876"/>
</dbReference>
<dbReference type="KEGG" id="spn:SP_1876"/>
<dbReference type="eggNOG" id="COG1354">
    <property type="taxonomic scope" value="Bacteria"/>
</dbReference>
<dbReference type="PhylomeDB" id="Q97NX5"/>
<dbReference type="BioCyc" id="SPNE170187:G1FZB-1906-MONOMER"/>
<dbReference type="Proteomes" id="UP000000585">
    <property type="component" value="Chromosome"/>
</dbReference>
<dbReference type="GO" id="GO:0005737">
    <property type="term" value="C:cytoplasm"/>
    <property type="evidence" value="ECO:0007669"/>
    <property type="project" value="UniProtKB-SubCell"/>
</dbReference>
<dbReference type="GO" id="GO:0051301">
    <property type="term" value="P:cell division"/>
    <property type="evidence" value="ECO:0007669"/>
    <property type="project" value="UniProtKB-KW"/>
</dbReference>
<dbReference type="GO" id="GO:0007059">
    <property type="term" value="P:chromosome segregation"/>
    <property type="evidence" value="ECO:0007669"/>
    <property type="project" value="UniProtKB-UniRule"/>
</dbReference>
<dbReference type="GO" id="GO:0006260">
    <property type="term" value="P:DNA replication"/>
    <property type="evidence" value="ECO:0007669"/>
    <property type="project" value="UniProtKB-UniRule"/>
</dbReference>
<dbReference type="Gene3D" id="6.10.250.2410">
    <property type="match status" value="1"/>
</dbReference>
<dbReference type="Gene3D" id="1.10.10.580">
    <property type="entry name" value="Structural maintenance of chromosome 1. Chain E"/>
    <property type="match status" value="1"/>
</dbReference>
<dbReference type="HAMAP" id="MF_01805">
    <property type="entry name" value="ScpA"/>
    <property type="match status" value="1"/>
</dbReference>
<dbReference type="InterPro" id="IPR003768">
    <property type="entry name" value="ScpA"/>
</dbReference>
<dbReference type="InterPro" id="IPR023093">
    <property type="entry name" value="ScpA-like_C"/>
</dbReference>
<dbReference type="NCBIfam" id="NF000993">
    <property type="entry name" value="PRK00104.1-2"/>
    <property type="match status" value="1"/>
</dbReference>
<dbReference type="PANTHER" id="PTHR33969">
    <property type="entry name" value="SEGREGATION AND CONDENSATION PROTEIN A"/>
    <property type="match status" value="1"/>
</dbReference>
<dbReference type="PANTHER" id="PTHR33969:SF2">
    <property type="entry name" value="SEGREGATION AND CONDENSATION PROTEIN A"/>
    <property type="match status" value="1"/>
</dbReference>
<dbReference type="Pfam" id="PF02616">
    <property type="entry name" value="SMC_ScpA"/>
    <property type="match status" value="1"/>
</dbReference>
<sequence length="242" mass="28300">MDIKLKDFEGPLDLLLHLVSKYQMDIYDVPITEVIEQYLAYVSTLQAMRLEVTGEYMVMASQLMLIKSRKLLPKVAEVTDLGDDLEQDLLSQIEEYRKFKLLGEHLEAKHQERAQYYSKAPTELIYEDAELVHDKTTIDLFLTFSNILAKKKEEFAQNHTTILRDEYKIEDMMIIVKESLIGRDQLRLQDLFKEAQNVQEVITLFLATLELIKTQELILVQEESFGDIYLMEKKEESQVPQS</sequence>
<protein>
    <recommendedName>
        <fullName evidence="1">Segregation and condensation protein A</fullName>
    </recommendedName>
</protein>
<evidence type="ECO:0000255" key="1">
    <source>
        <dbReference type="HAMAP-Rule" id="MF_01805"/>
    </source>
</evidence>
<accession>Q97NX5</accession>
<keyword id="KW-0131">Cell cycle</keyword>
<keyword id="KW-0132">Cell division</keyword>
<keyword id="KW-0159">Chromosome partition</keyword>
<keyword id="KW-0963">Cytoplasm</keyword>
<keyword id="KW-1185">Reference proteome</keyword>
<proteinExistence type="evidence at protein level"/>
<organism>
    <name type="scientific">Streptococcus pneumoniae serotype 4 (strain ATCC BAA-334 / TIGR4)</name>
    <dbReference type="NCBI Taxonomy" id="170187"/>
    <lineage>
        <taxon>Bacteria</taxon>
        <taxon>Bacillati</taxon>
        <taxon>Bacillota</taxon>
        <taxon>Bacilli</taxon>
        <taxon>Lactobacillales</taxon>
        <taxon>Streptococcaceae</taxon>
        <taxon>Streptococcus</taxon>
    </lineage>
</organism>
<name>SCPA_STRPN</name>